<gene>
    <name evidence="1" type="primary">nuoN</name>
    <name type="ordered locus">Mlg_1957</name>
</gene>
<comment type="function">
    <text evidence="1">NDH-1 shuttles electrons from NADH, via FMN and iron-sulfur (Fe-S) centers, to quinones in the respiratory chain. The immediate electron acceptor for the enzyme in this species is believed to be ubiquinone. Couples the redox reaction to proton translocation (for every two electrons transferred, four hydrogen ions are translocated across the cytoplasmic membrane), and thus conserves the redox energy in a proton gradient.</text>
</comment>
<comment type="catalytic activity">
    <reaction evidence="1">
        <text>a quinone + NADH + 5 H(+)(in) = a quinol + NAD(+) + 4 H(+)(out)</text>
        <dbReference type="Rhea" id="RHEA:57888"/>
        <dbReference type="ChEBI" id="CHEBI:15378"/>
        <dbReference type="ChEBI" id="CHEBI:24646"/>
        <dbReference type="ChEBI" id="CHEBI:57540"/>
        <dbReference type="ChEBI" id="CHEBI:57945"/>
        <dbReference type="ChEBI" id="CHEBI:132124"/>
    </reaction>
</comment>
<comment type="subunit">
    <text evidence="1">NDH-1 is composed of 14 different subunits. Subunits NuoA, H, J, K, L, M, N constitute the membrane sector of the complex.</text>
</comment>
<comment type="subcellular location">
    <subcellularLocation>
        <location evidence="1">Cell inner membrane</location>
        <topology evidence="1">Multi-pass membrane protein</topology>
    </subcellularLocation>
</comment>
<comment type="similarity">
    <text evidence="1">Belongs to the complex I subunit 2 family.</text>
</comment>
<protein>
    <recommendedName>
        <fullName evidence="1">NADH-quinone oxidoreductase subunit N</fullName>
        <ecNumber evidence="1">7.1.1.-</ecNumber>
    </recommendedName>
    <alternativeName>
        <fullName evidence="1">NADH dehydrogenase I subunit N</fullName>
    </alternativeName>
    <alternativeName>
        <fullName evidence="1">NDH-1 subunit N</fullName>
    </alternativeName>
</protein>
<sequence length="488" mass="52333">MTVETPDFVMPDFSLALPEIWMLVMACVVLVVDLYSQDSRRGMTFMLTQFTLVVAGVLAIVAHWGEPAVTFSGTYVSDNLAAVLKVAIAGLGFLSFAYCRDYLEDRGLLKGEYFVLGLFSLLGMMIMASAHNLMTVYLGLELLALTLYAMVAFNRDNLRATEAAMKYFVLGAIASGILLYGMSLIYGATGSLNLAEVAVYAGEQGANDWLLLLGMTLVVVGVAFKFGAVPFHTWMPDVYQGAPTTVALFASTAPKVAAVALFVRLLSEGLGPIHDQWQPMIILLAVASLVVGNLAALAQTNIKRMLAYSTASHVGFILLGFIAGTAEGYSTALFYAITYGIMSAGAFGLIILLSHRGFEAENISDFKGLNDRSPAMALMMLLLMFSMTGIPGTVGFYAKWLVIKSVVDVGLVWLAVFAVVFAVIGAFYYLRVLKFVYFDKPETDAPPQTGSPAMRGLLVANGIAVLLLGIFPDSLISACMAAFGVSYG</sequence>
<name>NUON_ALKEH</name>
<proteinExistence type="inferred from homology"/>
<reference key="1">
    <citation type="submission" date="2006-08" db="EMBL/GenBank/DDBJ databases">
        <title>Complete sequence of Alkalilimnicola ehrilichei MLHE-1.</title>
        <authorList>
            <person name="Copeland A."/>
            <person name="Lucas S."/>
            <person name="Lapidus A."/>
            <person name="Barry K."/>
            <person name="Detter J.C."/>
            <person name="Glavina del Rio T."/>
            <person name="Hammon N."/>
            <person name="Israni S."/>
            <person name="Dalin E."/>
            <person name="Tice H."/>
            <person name="Pitluck S."/>
            <person name="Sims D."/>
            <person name="Brettin T."/>
            <person name="Bruce D."/>
            <person name="Han C."/>
            <person name="Tapia R."/>
            <person name="Gilna P."/>
            <person name="Schmutz J."/>
            <person name="Larimer F."/>
            <person name="Land M."/>
            <person name="Hauser L."/>
            <person name="Kyrpides N."/>
            <person name="Mikhailova N."/>
            <person name="Oremland R.S."/>
            <person name="Hoeft S.E."/>
            <person name="Switzer-Blum J."/>
            <person name="Kulp T."/>
            <person name="King G."/>
            <person name="Tabita R."/>
            <person name="Witte B."/>
            <person name="Santini J.M."/>
            <person name="Basu P."/>
            <person name="Hollibaugh J.T."/>
            <person name="Xie G."/>
            <person name="Stolz J.F."/>
            <person name="Richardson P."/>
        </authorList>
    </citation>
    <scope>NUCLEOTIDE SEQUENCE [LARGE SCALE GENOMIC DNA]</scope>
    <source>
        <strain>ATCC BAA-1101 / DSM 17681 / MLHE-1</strain>
    </source>
</reference>
<dbReference type="EC" id="7.1.1.-" evidence="1"/>
<dbReference type="EMBL" id="CP000453">
    <property type="protein sequence ID" value="ABI57299.1"/>
    <property type="molecule type" value="Genomic_DNA"/>
</dbReference>
<dbReference type="RefSeq" id="WP_011629693.1">
    <property type="nucleotide sequence ID" value="NC_008340.1"/>
</dbReference>
<dbReference type="SMR" id="Q0A788"/>
<dbReference type="KEGG" id="aeh:Mlg_1957"/>
<dbReference type="eggNOG" id="COG1007">
    <property type="taxonomic scope" value="Bacteria"/>
</dbReference>
<dbReference type="HOGENOM" id="CLU_007100_1_3_6"/>
<dbReference type="OrthoDB" id="9768329at2"/>
<dbReference type="Proteomes" id="UP000001962">
    <property type="component" value="Chromosome"/>
</dbReference>
<dbReference type="GO" id="GO:0005886">
    <property type="term" value="C:plasma membrane"/>
    <property type="evidence" value="ECO:0007669"/>
    <property type="project" value="UniProtKB-SubCell"/>
</dbReference>
<dbReference type="GO" id="GO:0008137">
    <property type="term" value="F:NADH dehydrogenase (ubiquinone) activity"/>
    <property type="evidence" value="ECO:0007669"/>
    <property type="project" value="InterPro"/>
</dbReference>
<dbReference type="GO" id="GO:0050136">
    <property type="term" value="F:NADH:ubiquinone reductase (non-electrogenic) activity"/>
    <property type="evidence" value="ECO:0007669"/>
    <property type="project" value="UniProtKB-UniRule"/>
</dbReference>
<dbReference type="GO" id="GO:0048038">
    <property type="term" value="F:quinone binding"/>
    <property type="evidence" value="ECO:0007669"/>
    <property type="project" value="UniProtKB-KW"/>
</dbReference>
<dbReference type="GO" id="GO:0042773">
    <property type="term" value="P:ATP synthesis coupled electron transport"/>
    <property type="evidence" value="ECO:0007669"/>
    <property type="project" value="InterPro"/>
</dbReference>
<dbReference type="HAMAP" id="MF_00445">
    <property type="entry name" value="NDH1_NuoN_1"/>
    <property type="match status" value="1"/>
</dbReference>
<dbReference type="InterPro" id="IPR010096">
    <property type="entry name" value="NADH-Q_OxRdtase_suN/2"/>
</dbReference>
<dbReference type="InterPro" id="IPR001750">
    <property type="entry name" value="ND/Mrp_TM"/>
</dbReference>
<dbReference type="NCBIfam" id="TIGR01770">
    <property type="entry name" value="NDH_I_N"/>
    <property type="match status" value="1"/>
</dbReference>
<dbReference type="NCBIfam" id="NF004442">
    <property type="entry name" value="PRK05777.1-5"/>
    <property type="match status" value="1"/>
</dbReference>
<dbReference type="PANTHER" id="PTHR22773">
    <property type="entry name" value="NADH DEHYDROGENASE"/>
    <property type="match status" value="1"/>
</dbReference>
<dbReference type="Pfam" id="PF00361">
    <property type="entry name" value="Proton_antipo_M"/>
    <property type="match status" value="1"/>
</dbReference>
<dbReference type="PRINTS" id="PR01434">
    <property type="entry name" value="NADHDHGNASE5"/>
</dbReference>
<evidence type="ECO:0000255" key="1">
    <source>
        <dbReference type="HAMAP-Rule" id="MF_00445"/>
    </source>
</evidence>
<feature type="chain" id="PRO_0000391092" description="NADH-quinone oxidoreductase subunit N">
    <location>
        <begin position="1"/>
        <end position="488"/>
    </location>
</feature>
<feature type="transmembrane region" description="Helical" evidence="1">
    <location>
        <begin position="15"/>
        <end position="35"/>
    </location>
</feature>
<feature type="transmembrane region" description="Helical" evidence="1">
    <location>
        <begin position="42"/>
        <end position="62"/>
    </location>
</feature>
<feature type="transmembrane region" description="Helical" evidence="1">
    <location>
        <begin position="79"/>
        <end position="99"/>
    </location>
</feature>
<feature type="transmembrane region" description="Helical" evidence="1">
    <location>
        <begin position="108"/>
        <end position="128"/>
    </location>
</feature>
<feature type="transmembrane region" description="Helical" evidence="1">
    <location>
        <begin position="133"/>
        <end position="153"/>
    </location>
</feature>
<feature type="transmembrane region" description="Helical" evidence="1">
    <location>
        <begin position="168"/>
        <end position="188"/>
    </location>
</feature>
<feature type="transmembrane region" description="Helical" evidence="1">
    <location>
        <begin position="209"/>
        <end position="229"/>
    </location>
</feature>
<feature type="transmembrane region" description="Helical" evidence="1">
    <location>
        <begin position="243"/>
        <end position="263"/>
    </location>
</feature>
<feature type="transmembrane region" description="Helical" evidence="1">
    <location>
        <begin position="277"/>
        <end position="297"/>
    </location>
</feature>
<feature type="transmembrane region" description="Helical" evidence="1">
    <location>
        <begin position="305"/>
        <end position="325"/>
    </location>
</feature>
<feature type="transmembrane region" description="Helical" evidence="1">
    <location>
        <begin position="333"/>
        <end position="353"/>
    </location>
</feature>
<feature type="transmembrane region" description="Helical" evidence="1">
    <location>
        <begin position="376"/>
        <end position="396"/>
    </location>
</feature>
<feature type="transmembrane region" description="Helical" evidence="1">
    <location>
        <begin position="409"/>
        <end position="429"/>
    </location>
</feature>
<feature type="transmembrane region" description="Helical" evidence="1">
    <location>
        <begin position="456"/>
        <end position="476"/>
    </location>
</feature>
<keyword id="KW-0997">Cell inner membrane</keyword>
<keyword id="KW-1003">Cell membrane</keyword>
<keyword id="KW-0472">Membrane</keyword>
<keyword id="KW-0520">NAD</keyword>
<keyword id="KW-0874">Quinone</keyword>
<keyword id="KW-1185">Reference proteome</keyword>
<keyword id="KW-1278">Translocase</keyword>
<keyword id="KW-0812">Transmembrane</keyword>
<keyword id="KW-1133">Transmembrane helix</keyword>
<keyword id="KW-0813">Transport</keyword>
<keyword id="KW-0830">Ubiquinone</keyword>
<organism>
    <name type="scientific">Alkalilimnicola ehrlichii (strain ATCC BAA-1101 / DSM 17681 / MLHE-1)</name>
    <dbReference type="NCBI Taxonomy" id="187272"/>
    <lineage>
        <taxon>Bacteria</taxon>
        <taxon>Pseudomonadati</taxon>
        <taxon>Pseudomonadota</taxon>
        <taxon>Gammaproteobacteria</taxon>
        <taxon>Chromatiales</taxon>
        <taxon>Ectothiorhodospiraceae</taxon>
        <taxon>Alkalilimnicola</taxon>
    </lineage>
</organism>
<accession>Q0A788</accession>